<comment type="similarity">
    <text evidence="2">Belongs to the IS21/IS1162 putative ATP-binding protein family.</text>
</comment>
<evidence type="ECO:0000255" key="1"/>
<evidence type="ECO:0000305" key="2"/>
<sequence>MMTQHTLSQLHQLRLGGMARALEEQWTLPASHSLSFDERLGLLLDRELAWRDDKRLERLRKQAKLKYASACLEDLDRRRGRTLDERLIATLASGDWIRQRHNLLLTGPTGVGKTWFACALGHQACRQGYSALYLRTPRLLEQLRIAHGDGSFGRTLQQLAKVDVLILDDWGLAALEENARHDLLEVIDDRAGSRSTILTSQLPSSTGTAGSTTPRWPTPCSIAWYTTPTES</sequence>
<protein>
    <recommendedName>
        <fullName>Insertion sequence IS1162 putative ATP-binding protein</fullName>
    </recommendedName>
</protein>
<feature type="chain" id="PRO_0000075480" description="Insertion sequence IS1162 putative ATP-binding protein">
    <location>
        <begin position="1"/>
        <end position="231"/>
    </location>
</feature>
<feature type="binding site" evidence="1">
    <location>
        <begin position="107"/>
        <end position="114"/>
    </location>
    <ligand>
        <name>ATP</name>
        <dbReference type="ChEBI" id="CHEBI:30616"/>
    </ligand>
</feature>
<accession>Q51762</accession>
<organism>
    <name type="scientific">Pseudomonas fluorescens</name>
    <dbReference type="NCBI Taxonomy" id="294"/>
    <lineage>
        <taxon>Bacteria</taxon>
        <taxon>Pseudomonadati</taxon>
        <taxon>Pseudomonadota</taxon>
        <taxon>Gammaproteobacteria</taxon>
        <taxon>Pseudomonadales</taxon>
        <taxon>Pseudomonadaceae</taxon>
        <taxon>Pseudomonas</taxon>
    </lineage>
</organism>
<name>ISTB_PSEFL</name>
<reference key="1">
    <citation type="journal article" date="1995" name="Gene">
        <title>Characterization and sequence of a novel insertion sequence, IS1162, from Pseudomonas fluorescens.</title>
        <authorList>
            <person name="Solinas F."/>
            <person name="Marconi A.M."/>
            <person name="Ruzzi M."/>
            <person name="Zennaro E."/>
        </authorList>
    </citation>
    <scope>NUCLEOTIDE SEQUENCE [GENOMIC DNA]</scope>
    <source>
        <strain>ST</strain>
    </source>
</reference>
<keyword id="KW-0067">ATP-binding</keyword>
<keyword id="KW-0547">Nucleotide-binding</keyword>
<keyword id="KW-0814">Transposable element</keyword>
<dbReference type="EMBL" id="X79443">
    <property type="protein sequence ID" value="CAA55960.1"/>
    <property type="molecule type" value="Genomic_DNA"/>
</dbReference>
<dbReference type="SMR" id="Q51762"/>
<dbReference type="GO" id="GO:0005524">
    <property type="term" value="F:ATP binding"/>
    <property type="evidence" value="ECO:0007669"/>
    <property type="project" value="UniProtKB-KW"/>
</dbReference>
<dbReference type="GO" id="GO:0016887">
    <property type="term" value="F:ATP hydrolysis activity"/>
    <property type="evidence" value="ECO:0007669"/>
    <property type="project" value="InterPro"/>
</dbReference>
<dbReference type="GO" id="GO:0006260">
    <property type="term" value="P:DNA replication"/>
    <property type="evidence" value="ECO:0007669"/>
    <property type="project" value="TreeGrafter"/>
</dbReference>
<dbReference type="CDD" id="cd00009">
    <property type="entry name" value="AAA"/>
    <property type="match status" value="1"/>
</dbReference>
<dbReference type="Gene3D" id="3.40.50.300">
    <property type="entry name" value="P-loop containing nucleotide triphosphate hydrolases"/>
    <property type="match status" value="1"/>
</dbReference>
<dbReference type="InterPro" id="IPR003593">
    <property type="entry name" value="AAA+_ATPase"/>
</dbReference>
<dbReference type="InterPro" id="IPR028350">
    <property type="entry name" value="DNAC/IstB-like"/>
</dbReference>
<dbReference type="InterPro" id="IPR047661">
    <property type="entry name" value="IstB"/>
</dbReference>
<dbReference type="InterPro" id="IPR002611">
    <property type="entry name" value="IstB_ATP-bd"/>
</dbReference>
<dbReference type="InterPro" id="IPR027417">
    <property type="entry name" value="P-loop_NTPase"/>
</dbReference>
<dbReference type="NCBIfam" id="NF038214">
    <property type="entry name" value="IS21_help_AAA"/>
    <property type="match status" value="1"/>
</dbReference>
<dbReference type="PANTHER" id="PTHR30050:SF4">
    <property type="entry name" value="ATP-BINDING PROTEIN RV3427C IN INSERTION SEQUENCE-RELATED"/>
    <property type="match status" value="1"/>
</dbReference>
<dbReference type="PANTHER" id="PTHR30050">
    <property type="entry name" value="CHROMOSOMAL REPLICATION INITIATOR PROTEIN DNAA"/>
    <property type="match status" value="1"/>
</dbReference>
<dbReference type="Pfam" id="PF01695">
    <property type="entry name" value="IstB_IS21"/>
    <property type="match status" value="1"/>
</dbReference>
<dbReference type="PIRSF" id="PIRSF003073">
    <property type="entry name" value="DNAC_TnpB_IstB"/>
    <property type="match status" value="1"/>
</dbReference>
<dbReference type="SMART" id="SM00382">
    <property type="entry name" value="AAA"/>
    <property type="match status" value="1"/>
</dbReference>
<dbReference type="SUPFAM" id="SSF52540">
    <property type="entry name" value="P-loop containing nucleoside triphosphate hydrolases"/>
    <property type="match status" value="1"/>
</dbReference>
<proteinExistence type="inferred from homology"/>